<keyword id="KW-0536">Nodulation</keyword>
<keyword id="KW-0539">Nucleus</keyword>
<keyword id="KW-1185">Reference proteome</keyword>
<keyword id="KW-0804">Transcription</keyword>
<keyword id="KW-0805">Transcription regulation</keyword>
<organism>
    <name type="scientific">Medicago truncatula</name>
    <name type="common">Barrel medic</name>
    <name type="synonym">Medicago tribuloides</name>
    <dbReference type="NCBI Taxonomy" id="3880"/>
    <lineage>
        <taxon>Eukaryota</taxon>
        <taxon>Viridiplantae</taxon>
        <taxon>Streptophyta</taxon>
        <taxon>Embryophyta</taxon>
        <taxon>Tracheophyta</taxon>
        <taxon>Spermatophyta</taxon>
        <taxon>Magnoliopsida</taxon>
        <taxon>eudicotyledons</taxon>
        <taxon>Gunneridae</taxon>
        <taxon>Pentapetalae</taxon>
        <taxon>rosids</taxon>
        <taxon>fabids</taxon>
        <taxon>Fabales</taxon>
        <taxon>Fabaceae</taxon>
        <taxon>Papilionoideae</taxon>
        <taxon>50 kb inversion clade</taxon>
        <taxon>NPAAA clade</taxon>
        <taxon>Hologalegina</taxon>
        <taxon>IRL clade</taxon>
        <taxon>Trifolieae</taxon>
        <taxon>Medicago</taxon>
    </lineage>
</organism>
<name>NSP1_MEDTR</name>
<accession>Q4VYC8</accession>
<accession>G7L7I4</accession>
<accession>Q4VYC5</accession>
<accession>Q4VYC6</accession>
<evidence type="ECO:0000255" key="1">
    <source>
        <dbReference type="PROSITE-ProRule" id="PRU01191"/>
    </source>
</evidence>
<evidence type="ECO:0000256" key="2">
    <source>
        <dbReference type="SAM" id="MobiDB-lite"/>
    </source>
</evidence>
<evidence type="ECO:0000269" key="3">
    <source>
    </source>
</evidence>
<evidence type="ECO:0000269" key="4">
    <source>
    </source>
</evidence>
<evidence type="ECO:0000269" key="5">
    <source>
    </source>
</evidence>
<evidence type="ECO:0000269" key="6">
    <source>
    </source>
</evidence>
<evidence type="ECO:0000303" key="7">
    <source>
    </source>
</evidence>
<evidence type="ECO:0000305" key="8"/>
<evidence type="ECO:0000312" key="9">
    <source>
        <dbReference type="EMBL" id="AET01770.1"/>
    </source>
</evidence>
<reference key="1">
    <citation type="journal article" date="2005" name="Science">
        <title>NSP1 of the GRAS protein family is essential for rhizobial Nod factor-induced transcription.</title>
        <authorList>
            <person name="Smit P."/>
            <person name="Raedts J."/>
            <person name="Portyanko V."/>
            <person name="Debelle F."/>
            <person name="Gough C."/>
            <person name="Bisseling T."/>
            <person name="Geurts R."/>
        </authorList>
    </citation>
    <scope>NUCLEOTIDE SEQUENCE [GENOMIC DNA]</scope>
    <scope>FUNCTION</scope>
    <scope>MUTAGENESIS OF 240-ARG--GLU-554 AND 488-TRP--GLU-554</scope>
    <scope>TISSUE SPECIFICITY</scope>
    <scope>INDUCTION</scope>
</reference>
<reference key="2">
    <citation type="journal article" date="2011" name="Nature">
        <title>The Medicago genome provides insight into the evolution of rhizobial symbioses.</title>
        <authorList>
            <person name="Young N.D."/>
            <person name="Debelle F."/>
            <person name="Oldroyd G.E.D."/>
            <person name="Geurts R."/>
            <person name="Cannon S.B."/>
            <person name="Udvardi M.K."/>
            <person name="Benedito V.A."/>
            <person name="Mayer K.F.X."/>
            <person name="Gouzy J."/>
            <person name="Schoof H."/>
            <person name="Van de Peer Y."/>
            <person name="Proost S."/>
            <person name="Cook D.R."/>
            <person name="Meyers B.C."/>
            <person name="Spannagl M."/>
            <person name="Cheung F."/>
            <person name="De Mita S."/>
            <person name="Krishnakumar V."/>
            <person name="Gundlach H."/>
            <person name="Zhou S."/>
            <person name="Mudge J."/>
            <person name="Bharti A.K."/>
            <person name="Murray J.D."/>
            <person name="Naoumkina M.A."/>
            <person name="Rosen B."/>
            <person name="Silverstein K.A.T."/>
            <person name="Tang H."/>
            <person name="Rombauts S."/>
            <person name="Zhao P.X."/>
            <person name="Zhou P."/>
            <person name="Barbe V."/>
            <person name="Bardou P."/>
            <person name="Bechner M."/>
            <person name="Bellec A."/>
            <person name="Berger A."/>
            <person name="Berges H."/>
            <person name="Bidwell S."/>
            <person name="Bisseling T."/>
            <person name="Choisne N."/>
            <person name="Couloux A."/>
            <person name="Denny R."/>
            <person name="Deshpande S."/>
            <person name="Dai X."/>
            <person name="Doyle J.J."/>
            <person name="Dudez A.-M."/>
            <person name="Farmer A.D."/>
            <person name="Fouteau S."/>
            <person name="Franken C."/>
            <person name="Gibelin C."/>
            <person name="Gish J."/>
            <person name="Goldstein S."/>
            <person name="Gonzalez A.J."/>
            <person name="Green P.J."/>
            <person name="Hallab A."/>
            <person name="Hartog M."/>
            <person name="Hua A."/>
            <person name="Humphray S.J."/>
            <person name="Jeong D.-H."/>
            <person name="Jing Y."/>
            <person name="Jocker A."/>
            <person name="Kenton S.M."/>
            <person name="Kim D.-J."/>
            <person name="Klee K."/>
            <person name="Lai H."/>
            <person name="Lang C."/>
            <person name="Lin S."/>
            <person name="Macmil S.L."/>
            <person name="Magdelenat G."/>
            <person name="Matthews L."/>
            <person name="McCorrison J."/>
            <person name="Monaghan E.L."/>
            <person name="Mun J.-H."/>
            <person name="Najar F.Z."/>
            <person name="Nicholson C."/>
            <person name="Noirot C."/>
            <person name="O'Bleness M."/>
            <person name="Paule C.R."/>
            <person name="Poulain J."/>
            <person name="Prion F."/>
            <person name="Qin B."/>
            <person name="Qu C."/>
            <person name="Retzel E.F."/>
            <person name="Riddle C."/>
            <person name="Sallet E."/>
            <person name="Samain S."/>
            <person name="Samson N."/>
            <person name="Sanders I."/>
            <person name="Saurat O."/>
            <person name="Scarpelli C."/>
            <person name="Schiex T."/>
            <person name="Segurens B."/>
            <person name="Severin A.J."/>
            <person name="Sherrier D.J."/>
            <person name="Shi R."/>
            <person name="Sims S."/>
            <person name="Singer S.R."/>
            <person name="Sinharoy S."/>
            <person name="Sterck L."/>
            <person name="Viollet A."/>
            <person name="Wang B.-B."/>
            <person name="Wang K."/>
            <person name="Wang M."/>
            <person name="Wang X."/>
            <person name="Warfsmann J."/>
            <person name="Weissenbach J."/>
            <person name="White D.D."/>
            <person name="White J.D."/>
            <person name="Wiley G.B."/>
            <person name="Wincker P."/>
            <person name="Xing Y."/>
            <person name="Yang L."/>
            <person name="Yao Z."/>
            <person name="Ying F."/>
            <person name="Zhai J."/>
            <person name="Zhou L."/>
            <person name="Zuber A."/>
            <person name="Denarie J."/>
            <person name="Dixon R.A."/>
            <person name="May G.D."/>
            <person name="Schwartz D.C."/>
            <person name="Rogers J."/>
            <person name="Quetier F."/>
            <person name="Town C.D."/>
            <person name="Roe B.A."/>
        </authorList>
    </citation>
    <scope>NUCLEOTIDE SEQUENCE [LARGE SCALE GENOMIC DNA]</scope>
    <source>
        <strain>cv. Jemalong A17</strain>
    </source>
</reference>
<reference key="3">
    <citation type="journal article" date="2014" name="BMC Genomics">
        <title>An improved genome release (version Mt4.0) for the model legume Medicago truncatula.</title>
        <authorList>
            <person name="Tang H."/>
            <person name="Krishnakumar V."/>
            <person name="Bidwell S."/>
            <person name="Rosen B."/>
            <person name="Chan A."/>
            <person name="Zhou S."/>
            <person name="Gentzbittel L."/>
            <person name="Childs K.L."/>
            <person name="Yandell M."/>
            <person name="Gundlach H."/>
            <person name="Mayer K.F."/>
            <person name="Schwartz D.C."/>
            <person name="Town C.D."/>
        </authorList>
    </citation>
    <scope>GENOME REANNOTATION</scope>
    <source>
        <strain>cv. Jemalong A17</strain>
    </source>
</reference>
<reference key="4">
    <citation type="journal article" date="2012" name="Plant Physiol.">
        <title>Medicago truncatula ERN transcription factors: regulatory interplay with NSP1/NSP2 GRAS factors and expression dynamics throughout rhizobial infection.</title>
        <authorList>
            <person name="Cerri M.R."/>
            <person name="Frances L."/>
            <person name="Laloum T."/>
            <person name="Auriac M.C."/>
            <person name="Niebel A."/>
            <person name="Oldroyd G.E."/>
            <person name="Barker D.G."/>
            <person name="Fournier J."/>
            <person name="de Carvalho-Niebel F."/>
        </authorList>
    </citation>
    <scope>FUNCTION</scope>
</reference>
<reference key="5">
    <citation type="journal article" date="2011" name="Plant Cell">
        <title>Strigolactone biosynthesis in Medicago truncatula and rice requires the symbiotic GRAS-type transcription factors NSP1 and NSP2.</title>
        <authorList>
            <person name="Liu W."/>
            <person name="Kohlen W."/>
            <person name="Lillo A."/>
            <person name="Op den Camp R."/>
            <person name="Ivanov S."/>
            <person name="Hartog M."/>
            <person name="Limpens E."/>
            <person name="Jamil M."/>
            <person name="Smaczniak C."/>
            <person name="Kaufmann K."/>
            <person name="Yang W.C."/>
            <person name="Hooiveld G.J."/>
            <person name="Charnikhova T."/>
            <person name="Bouwmeester H.J."/>
            <person name="Bisseling T."/>
            <person name="Geurts R."/>
        </authorList>
    </citation>
    <scope>FUNCTION</scope>
    <scope>TISSUE SPECIFICITY</scope>
</reference>
<reference key="6">
    <citation type="journal article" date="2015" name="BMC Plant Biol.">
        <title>The strigolactone biosynthesis gene DWARF27 is co-opted in rhizobium symbiosis.</title>
        <authorList>
            <person name="van Zeijl A."/>
            <person name="Liu W."/>
            <person name="Xiao T.T."/>
            <person name="Kohlen W."/>
            <person name="Yang W.C."/>
            <person name="Bisseling T."/>
            <person name="Geurts R."/>
        </authorList>
    </citation>
    <scope>FUNCTION</scope>
</reference>
<feature type="chain" id="PRO_0000132232" description="Protein NODULATION SIGNALING PATHWAY 1">
    <location>
        <begin position="1"/>
        <end position="554"/>
    </location>
</feature>
<feature type="domain" description="GRAS" evidence="1">
    <location>
        <begin position="159"/>
        <end position="548"/>
    </location>
</feature>
<feature type="region of interest" description="Disordered" evidence="2">
    <location>
        <begin position="76"/>
        <end position="165"/>
    </location>
</feature>
<feature type="region of interest" description="Leucine repeat I (LRI)" evidence="1">
    <location>
        <begin position="166"/>
        <end position="227"/>
    </location>
</feature>
<feature type="region of interest" description="VHIID" evidence="1">
    <location>
        <begin position="246"/>
        <end position="315"/>
    </location>
</feature>
<feature type="region of interest" description="Leucine repeat II (LRII)" evidence="1">
    <location>
        <begin position="331"/>
        <end position="373"/>
    </location>
</feature>
<feature type="region of interest" description="PFYRE" evidence="1">
    <location>
        <begin position="383"/>
        <end position="468"/>
    </location>
</feature>
<feature type="region of interest" description="SAW" evidence="1">
    <location>
        <begin position="471"/>
        <end position="548"/>
    </location>
</feature>
<feature type="short sequence motif" description="VHIID" evidence="1">
    <location>
        <begin position="281"/>
        <end position="285"/>
    </location>
</feature>
<feature type="compositionally biased region" description="Polar residues" evidence="2">
    <location>
        <begin position="82"/>
        <end position="91"/>
    </location>
</feature>
<feature type="compositionally biased region" description="Basic and acidic residues" evidence="2">
    <location>
        <begin position="95"/>
        <end position="107"/>
    </location>
</feature>
<feature type="compositionally biased region" description="Low complexity" evidence="2">
    <location>
        <begin position="150"/>
        <end position="162"/>
    </location>
</feature>
<feature type="mutagenesis site" description="In nsp1-1; loss of nodulation." evidence="3">
    <location>
        <begin position="240"/>
        <end position="554"/>
    </location>
</feature>
<feature type="mutagenesis site" description="In nsp1-2; loss of nodulation." evidence="3">
    <location>
        <begin position="488"/>
        <end position="554"/>
    </location>
</feature>
<sequence length="554" mass="61827">MTMEPNPTSDHILDWLEGSVSFFPSFLDDPYNNGYIHEYEIWNQNQDISNQYQIDANTNSSNATNSTTNIVAASTTTSTTSLEPNSFNNIPFSDLPKKRNAEDELSLKKQPQNQKNKRLKSRPMNESDNGDAALEGTVVRKSGGNKKGAAKANGSNSNNGNNKDGRWAEQLLNPCAVAITGGNLNRVQHLLYVLHELASTTGDANHRLAAHGLRALTHHLSSSSSSTPSGTITFASTEPRFFQKSLLKFYEFSPWFSFPNNIANASILQVLAEEPNNLRTLHILDIGVSHGVQWPTFLEALSRRPGGPPPLVRLTVVNASSSTENDQNMETPFSIGPCGDTFSSGLLGYAQSLNVNLQIKKLDNHPLQTLNAKSVDTSSDETLIVCAQFRLHHLNHNNPDERSEFLKVLRGMEPKGVILSENNMECCCSSCGDFATGFSRRVEYLWRFLDSTSSAFKNRDSDERKMMEGEAAKALTNQREMNERREKWCERMKEAGFAGEVFGEDAIDGGRALLRKYDNNWEMKVEENSTSVELWWKSQPVSFCSLWKLDKQPE</sequence>
<protein>
    <recommendedName>
        <fullName evidence="7">Protein NODULATION SIGNALING PATHWAY 1</fullName>
    </recommendedName>
</protein>
<proteinExistence type="evidence at protein level"/>
<comment type="function">
    <text evidence="3 4 5 6">Transcriptional regulator essential for Nod-factor-induced gene expression (PubMed:15961669). Acts downstream of calcium spiking (PubMed:15961669). May be a target of DMI3, a calcium/calmodulin-dependent protein kinase (CCaMK) (PubMed:15961669). Is essential for Nod factor-elicited expression of ERN1 (PubMed:23077241). Transcription factor involved in the control of strigolactone biosynthesis in roots through the activation of the beta-carotene isomerase D27, which participates in a pathway leading to biosynthesis of strigolactones (PubMed:22039214, PubMed:26503135).</text>
</comment>
<comment type="subcellular location">
    <subcellularLocation>
        <location evidence="8">Nucleus</location>
    </subcellularLocation>
</comment>
<comment type="tissue specificity">
    <text evidence="3">Expressed in epidermal and cortical root cells.</text>
</comment>
<comment type="induction">
    <text evidence="3">Not induced after treatment with Sinorhizobium meliloti.</text>
</comment>
<comment type="similarity">
    <text evidence="8">Belongs to the GRAS family.</text>
</comment>
<dbReference type="EMBL" id="AJ972478">
    <property type="protein sequence ID" value="CAJ00010.1"/>
    <property type="molecule type" value="Genomic_DNA"/>
</dbReference>
<dbReference type="EMBL" id="AJ972473">
    <property type="protein sequence ID" value="CAJ00005.1"/>
    <property type="molecule type" value="Genomic_DNA"/>
</dbReference>
<dbReference type="EMBL" id="AJ972480">
    <property type="protein sequence ID" value="CAJ00012.1"/>
    <property type="molecule type" value="Genomic_DNA"/>
</dbReference>
<dbReference type="EMBL" id="AJ972481">
    <property type="protein sequence ID" value="CAJ00013.1"/>
    <property type="molecule type" value="Genomic_DNA"/>
</dbReference>
<dbReference type="EMBL" id="CM001224">
    <property type="protein sequence ID" value="AET01770.1"/>
    <property type="molecule type" value="Genomic_DNA"/>
</dbReference>
<dbReference type="RefSeq" id="XP_003627294.1">
    <property type="nucleotide sequence ID" value="XM_003627246.2"/>
</dbReference>
<dbReference type="SMR" id="Q4VYC8"/>
<dbReference type="STRING" id="3880.Q4VYC8"/>
<dbReference type="PaxDb" id="3880-AET01770"/>
<dbReference type="GeneID" id="11434050"/>
<dbReference type="KEGG" id="mtr:11434050"/>
<dbReference type="eggNOG" id="ENOG502QSHA">
    <property type="taxonomic scope" value="Eukaryota"/>
</dbReference>
<dbReference type="HOGENOM" id="CLU_011924_5_1_1"/>
<dbReference type="OMA" id="WCERMRG"/>
<dbReference type="OrthoDB" id="1908565at2759"/>
<dbReference type="Proteomes" id="UP000002051">
    <property type="component" value="Chromosome 8"/>
</dbReference>
<dbReference type="GO" id="GO:0005634">
    <property type="term" value="C:nucleus"/>
    <property type="evidence" value="ECO:0000318"/>
    <property type="project" value="GO_Central"/>
</dbReference>
<dbReference type="GO" id="GO:0003700">
    <property type="term" value="F:DNA-binding transcription factor activity"/>
    <property type="evidence" value="ECO:0000318"/>
    <property type="project" value="GO_Central"/>
</dbReference>
<dbReference type="GO" id="GO:0043565">
    <property type="term" value="F:sequence-specific DNA binding"/>
    <property type="evidence" value="ECO:0000318"/>
    <property type="project" value="GO_Central"/>
</dbReference>
<dbReference type="GO" id="GO:0009877">
    <property type="term" value="P:nodulation"/>
    <property type="evidence" value="ECO:0007669"/>
    <property type="project" value="UniProtKB-KW"/>
</dbReference>
<dbReference type="GO" id="GO:0006355">
    <property type="term" value="P:regulation of DNA-templated transcription"/>
    <property type="evidence" value="ECO:0000318"/>
    <property type="project" value="GO_Central"/>
</dbReference>
<dbReference type="GO" id="GO:0009610">
    <property type="term" value="P:response to symbiotic fungus"/>
    <property type="evidence" value="ECO:0007669"/>
    <property type="project" value="UniProtKB-ARBA"/>
</dbReference>
<dbReference type="InterPro" id="IPR005202">
    <property type="entry name" value="TF_GRAS"/>
</dbReference>
<dbReference type="PANTHER" id="PTHR31636">
    <property type="entry name" value="OSJNBA0084A10.13 PROTEIN-RELATED"/>
    <property type="match status" value="1"/>
</dbReference>
<dbReference type="Pfam" id="PF03514">
    <property type="entry name" value="GRAS"/>
    <property type="match status" value="1"/>
</dbReference>
<dbReference type="PROSITE" id="PS50985">
    <property type="entry name" value="GRAS"/>
    <property type="match status" value="1"/>
</dbReference>
<gene>
    <name evidence="7" type="primary">NSP1</name>
    <name evidence="9" type="ordered locus">MTR_8g020840</name>
</gene>